<feature type="chain" id="PRO_1000094364" description="2-C-methyl-D-erythritol 4-phosphate cytidylyltransferase">
    <location>
        <begin position="1"/>
        <end position="241"/>
    </location>
</feature>
<feature type="site" description="Transition state stabilizer" evidence="1">
    <location>
        <position position="23"/>
    </location>
</feature>
<feature type="site" description="Transition state stabilizer" evidence="1">
    <location>
        <position position="30"/>
    </location>
</feature>
<feature type="site" description="Positions MEP for the nucleophilic attack" evidence="1">
    <location>
        <position position="160"/>
    </location>
</feature>
<feature type="site" description="Positions MEP for the nucleophilic attack" evidence="1">
    <location>
        <position position="216"/>
    </location>
</feature>
<comment type="function">
    <text evidence="1">Catalyzes the formation of 4-diphosphocytidyl-2-C-methyl-D-erythritol from CTP and 2-C-methyl-D-erythritol 4-phosphate (MEP).</text>
</comment>
<comment type="catalytic activity">
    <reaction evidence="1">
        <text>2-C-methyl-D-erythritol 4-phosphate + CTP + H(+) = 4-CDP-2-C-methyl-D-erythritol + diphosphate</text>
        <dbReference type="Rhea" id="RHEA:13429"/>
        <dbReference type="ChEBI" id="CHEBI:15378"/>
        <dbReference type="ChEBI" id="CHEBI:33019"/>
        <dbReference type="ChEBI" id="CHEBI:37563"/>
        <dbReference type="ChEBI" id="CHEBI:57823"/>
        <dbReference type="ChEBI" id="CHEBI:58262"/>
        <dbReference type="EC" id="2.7.7.60"/>
    </reaction>
</comment>
<comment type="pathway">
    <text evidence="1">Isoprenoid biosynthesis; isopentenyl diphosphate biosynthesis via DXP pathway; isopentenyl diphosphate from 1-deoxy-D-xylulose 5-phosphate: step 2/6.</text>
</comment>
<comment type="subunit">
    <text evidence="1">Homodimer.</text>
</comment>
<comment type="similarity">
    <text evidence="1">Belongs to the IspD/TarI cytidylyltransferase family. IspD subfamily.</text>
</comment>
<name>ISPD_YERPG</name>
<reference key="1">
    <citation type="journal article" date="2010" name="J. Bacteriol.">
        <title>Genome sequence of the deep-rooted Yersinia pestis strain Angola reveals new insights into the evolution and pangenome of the plague bacterium.</title>
        <authorList>
            <person name="Eppinger M."/>
            <person name="Worsham P.L."/>
            <person name="Nikolich M.P."/>
            <person name="Riley D.R."/>
            <person name="Sebastian Y."/>
            <person name="Mou S."/>
            <person name="Achtman M."/>
            <person name="Lindler L.E."/>
            <person name="Ravel J."/>
        </authorList>
    </citation>
    <scope>NUCLEOTIDE SEQUENCE [LARGE SCALE GENOMIC DNA]</scope>
    <source>
        <strain>Angola</strain>
    </source>
</reference>
<accession>A9R119</accession>
<proteinExistence type="inferred from homology"/>
<gene>
    <name evidence="1" type="primary">ispD</name>
    <name type="ordered locus">YpAngola_A0964</name>
</gene>
<keyword id="KW-0414">Isoprene biosynthesis</keyword>
<keyword id="KW-0548">Nucleotidyltransferase</keyword>
<keyword id="KW-0808">Transferase</keyword>
<protein>
    <recommendedName>
        <fullName evidence="1">2-C-methyl-D-erythritol 4-phosphate cytidylyltransferase</fullName>
        <ecNumber evidence="1">2.7.7.60</ecNumber>
    </recommendedName>
    <alternativeName>
        <fullName evidence="1">4-diphosphocytidyl-2C-methyl-D-erythritol synthase</fullName>
    </alternativeName>
    <alternativeName>
        <fullName evidence="1">MEP cytidylyltransferase</fullName>
        <shortName evidence="1">MCT</shortName>
    </alternativeName>
</protein>
<sequence length="241" mass="26401">MSNFAVSLPEVIAVLPAAGIGSRMLVDCPKQYLTVGGKTIIEHAIFSLLHHPRIQRVIVVIHPQDTQFSRLSVAQDPRISTVYGGDQRANSVMAGLQLAGQAEWVLVHDAARPCLHLDDLSRLLSITECSQVGGILAAPVRDTMKRAEPGIQAIAHTVDRQDLWHALTPQLFPLELLKLCLSRALREGVAVTDEASALEHCGYHPILVTGRSDNIKVTRPEDLALAEFYLTQRQSLNNDSL</sequence>
<evidence type="ECO:0000255" key="1">
    <source>
        <dbReference type="HAMAP-Rule" id="MF_00108"/>
    </source>
</evidence>
<dbReference type="EC" id="2.7.7.60" evidence="1"/>
<dbReference type="EMBL" id="CP000901">
    <property type="protein sequence ID" value="ABX87033.1"/>
    <property type="molecule type" value="Genomic_DNA"/>
</dbReference>
<dbReference type="RefSeq" id="WP_002209391.1">
    <property type="nucleotide sequence ID" value="NZ_CP009935.1"/>
</dbReference>
<dbReference type="SMR" id="A9R119"/>
<dbReference type="GeneID" id="57975348"/>
<dbReference type="KEGG" id="ypg:YpAngola_A0964"/>
<dbReference type="PATRIC" id="fig|349746.12.peg.1912"/>
<dbReference type="UniPathway" id="UPA00056">
    <property type="reaction ID" value="UER00093"/>
</dbReference>
<dbReference type="GO" id="GO:0050518">
    <property type="term" value="F:2-C-methyl-D-erythritol 4-phosphate cytidylyltransferase activity"/>
    <property type="evidence" value="ECO:0007669"/>
    <property type="project" value="UniProtKB-UniRule"/>
</dbReference>
<dbReference type="GO" id="GO:0019288">
    <property type="term" value="P:isopentenyl diphosphate biosynthetic process, methylerythritol 4-phosphate pathway"/>
    <property type="evidence" value="ECO:0007669"/>
    <property type="project" value="UniProtKB-UniRule"/>
</dbReference>
<dbReference type="CDD" id="cd02516">
    <property type="entry name" value="CDP-ME_synthetase"/>
    <property type="match status" value="1"/>
</dbReference>
<dbReference type="FunFam" id="3.90.550.10:FF:000003">
    <property type="entry name" value="2-C-methyl-D-erythritol 4-phosphate cytidylyltransferase"/>
    <property type="match status" value="1"/>
</dbReference>
<dbReference type="Gene3D" id="3.90.550.10">
    <property type="entry name" value="Spore Coat Polysaccharide Biosynthesis Protein SpsA, Chain A"/>
    <property type="match status" value="1"/>
</dbReference>
<dbReference type="HAMAP" id="MF_00108">
    <property type="entry name" value="IspD"/>
    <property type="match status" value="1"/>
</dbReference>
<dbReference type="InterPro" id="IPR001228">
    <property type="entry name" value="IspD"/>
</dbReference>
<dbReference type="InterPro" id="IPR034683">
    <property type="entry name" value="IspD/TarI"/>
</dbReference>
<dbReference type="InterPro" id="IPR050088">
    <property type="entry name" value="IspD/TarI_cytidylyltransf_bact"/>
</dbReference>
<dbReference type="InterPro" id="IPR018294">
    <property type="entry name" value="ISPD_synthase_CS"/>
</dbReference>
<dbReference type="InterPro" id="IPR029044">
    <property type="entry name" value="Nucleotide-diphossugar_trans"/>
</dbReference>
<dbReference type="NCBIfam" id="TIGR00453">
    <property type="entry name" value="ispD"/>
    <property type="match status" value="1"/>
</dbReference>
<dbReference type="PANTHER" id="PTHR32125">
    <property type="entry name" value="2-C-METHYL-D-ERYTHRITOL 4-PHOSPHATE CYTIDYLYLTRANSFERASE, CHLOROPLASTIC"/>
    <property type="match status" value="1"/>
</dbReference>
<dbReference type="PANTHER" id="PTHR32125:SF4">
    <property type="entry name" value="2-C-METHYL-D-ERYTHRITOL 4-PHOSPHATE CYTIDYLYLTRANSFERASE, CHLOROPLASTIC"/>
    <property type="match status" value="1"/>
</dbReference>
<dbReference type="Pfam" id="PF01128">
    <property type="entry name" value="IspD"/>
    <property type="match status" value="1"/>
</dbReference>
<dbReference type="SUPFAM" id="SSF53448">
    <property type="entry name" value="Nucleotide-diphospho-sugar transferases"/>
    <property type="match status" value="1"/>
</dbReference>
<dbReference type="PROSITE" id="PS01295">
    <property type="entry name" value="ISPD"/>
    <property type="match status" value="1"/>
</dbReference>
<organism>
    <name type="scientific">Yersinia pestis bv. Antiqua (strain Angola)</name>
    <dbReference type="NCBI Taxonomy" id="349746"/>
    <lineage>
        <taxon>Bacteria</taxon>
        <taxon>Pseudomonadati</taxon>
        <taxon>Pseudomonadota</taxon>
        <taxon>Gammaproteobacteria</taxon>
        <taxon>Enterobacterales</taxon>
        <taxon>Yersiniaceae</taxon>
        <taxon>Yersinia</taxon>
    </lineage>
</organism>